<organism>
    <name type="scientific">Caenorhabditis elegans</name>
    <dbReference type="NCBI Taxonomy" id="6239"/>
    <lineage>
        <taxon>Eukaryota</taxon>
        <taxon>Metazoa</taxon>
        <taxon>Ecdysozoa</taxon>
        <taxon>Nematoda</taxon>
        <taxon>Chromadorea</taxon>
        <taxon>Rhabditida</taxon>
        <taxon>Rhabditina</taxon>
        <taxon>Rhabditomorpha</taxon>
        <taxon>Rhabditoidea</taxon>
        <taxon>Rhabditidae</taxon>
        <taxon>Peloderinae</taxon>
        <taxon>Caenorhabditis</taxon>
    </lineage>
</organism>
<gene>
    <name type="primary">rbx-1</name>
    <name type="ORF">ZK287.5</name>
</gene>
<protein>
    <recommendedName>
        <fullName>RING-box protein 1</fullName>
        <shortName>Rbx1</shortName>
    </recommendedName>
    <alternativeName>
        <fullName>Ce-rbx-1</fullName>
    </alternativeName>
</protein>
<feature type="chain" id="PRO_0000056016" description="RING-box protein 1">
    <location>
        <begin position="1"/>
        <end position="110"/>
    </location>
</feature>
<feature type="zinc finger region" description="RING-type" evidence="3">
    <location>
        <begin position="44"/>
        <end position="100"/>
    </location>
</feature>
<feature type="binding site" evidence="2">
    <location>
        <position position="44"/>
    </location>
    <ligand>
        <name>Zn(2+)</name>
        <dbReference type="ChEBI" id="CHEBI:29105"/>
        <label>1</label>
    </ligand>
</feature>
<feature type="binding site" evidence="2">
    <location>
        <position position="47"/>
    </location>
    <ligand>
        <name>Zn(2+)</name>
        <dbReference type="ChEBI" id="CHEBI:29105"/>
        <label>1</label>
    </ligand>
</feature>
<feature type="binding site" evidence="2">
    <location>
        <position position="55"/>
    </location>
    <ligand>
        <name>Zn(2+)</name>
        <dbReference type="ChEBI" id="CHEBI:29105"/>
        <label>2</label>
    </ligand>
</feature>
<feature type="binding site" evidence="2">
    <location>
        <position position="58"/>
    </location>
    <ligand>
        <name>Zn(2+)</name>
        <dbReference type="ChEBI" id="CHEBI:29105"/>
        <label>2</label>
    </ligand>
</feature>
<feature type="binding site" evidence="2">
    <location>
        <position position="70"/>
    </location>
    <ligand>
        <name>Zn(2+)</name>
        <dbReference type="ChEBI" id="CHEBI:29105"/>
        <label>2</label>
    </ligand>
</feature>
<feature type="binding site" evidence="2">
    <location>
        <position position="77"/>
    </location>
    <ligand>
        <name>Zn(2+)</name>
        <dbReference type="ChEBI" id="CHEBI:29105"/>
        <label>3</label>
    </ligand>
</feature>
<feature type="binding site" evidence="2">
    <location>
        <position position="79"/>
    </location>
    <ligand>
        <name>Zn(2+)</name>
        <dbReference type="ChEBI" id="CHEBI:29105"/>
        <label>3</label>
    </ligand>
</feature>
<feature type="binding site" evidence="2">
    <location>
        <position position="82"/>
    </location>
    <ligand>
        <name>Zn(2+)</name>
        <dbReference type="ChEBI" id="CHEBI:29105"/>
        <label>1</label>
    </ligand>
</feature>
<feature type="binding site" evidence="2">
    <location>
        <position position="84"/>
    </location>
    <ligand>
        <name>Zn(2+)</name>
        <dbReference type="ChEBI" id="CHEBI:29105"/>
        <label>2</label>
    </ligand>
</feature>
<feature type="binding site" evidence="2">
    <location>
        <position position="96"/>
    </location>
    <ligand>
        <name>Zn(2+)</name>
        <dbReference type="ChEBI" id="CHEBI:29105"/>
        <label>3</label>
    </ligand>
</feature>
<feature type="binding site" evidence="2">
    <location>
        <position position="99"/>
    </location>
    <ligand>
        <name>Zn(2+)</name>
        <dbReference type="ChEBI" id="CHEBI:29105"/>
        <label>3</label>
    </ligand>
</feature>
<feature type="sequence conflict" description="In Ref. 2; BAB83695." evidence="6" ref="2">
    <original>AQ</original>
    <variation>GP</variation>
    <location>
        <begin position="2"/>
        <end position="3"/>
    </location>
</feature>
<accession>Q23457</accession>
<accession>Q8WSQ1</accession>
<reference key="1">
    <citation type="journal article" date="1998" name="Science">
        <title>Genome sequence of the nematode C. elegans: a platform for investigating biology.</title>
        <authorList>
            <consortium name="The C. elegans sequencing consortium"/>
        </authorList>
    </citation>
    <scope>NUCLEOTIDE SEQUENCE [LARGE SCALE GENOMIC DNA]</scope>
    <source>
        <strain>Bristol N2</strain>
    </source>
</reference>
<reference key="2">
    <citation type="journal article" date="2003" name="Genes Cells">
        <title>Caenorhabditis elegans RBX1 is essential for meiosis, mitotic chromosomal condensation and segregation, and cytokinesis.</title>
        <authorList>
            <person name="Sasagawa Y."/>
            <person name="Urano T."/>
            <person name="Kohara Y."/>
            <person name="Takahashi H."/>
            <person name="Higashitani A."/>
        </authorList>
    </citation>
    <scope>NUCLEOTIDE SEQUENCE [MRNA] OF 2-110</scope>
    <scope>FUNCTION</scope>
    <scope>TISSUE SPECIFICITY</scope>
    <scope>DEVELOPMENTAL STAGE</scope>
</reference>
<reference key="3">
    <citation type="journal article" date="2003" name="Curr. Biol.">
        <title>Neddylation and deneddylation of CUL-3 is required to target MEI-1/katanin for degradation at the meiosis-to-mitosis transition in C. elegans.</title>
        <authorList>
            <person name="Pintard L."/>
            <person name="Kurz T."/>
            <person name="Glaser S."/>
            <person name="Willis J.H."/>
            <person name="Peter M."/>
            <person name="Bowerman B."/>
        </authorList>
    </citation>
    <scope>INTERACTION WITH CSN-1 AND CSN-6</scope>
</reference>
<keyword id="KW-0131">Cell cycle</keyword>
<keyword id="KW-0132">Cell division</keyword>
<keyword id="KW-0963">Cytoplasm</keyword>
<keyword id="KW-0217">Developmental protein</keyword>
<keyword id="KW-0469">Meiosis</keyword>
<keyword id="KW-0479">Metal-binding</keyword>
<keyword id="KW-0498">Mitosis</keyword>
<keyword id="KW-0539">Nucleus</keyword>
<keyword id="KW-1185">Reference proteome</keyword>
<keyword id="KW-0833">Ubl conjugation pathway</keyword>
<keyword id="KW-0862">Zinc</keyword>
<keyword id="KW-0863">Zinc-finger</keyword>
<name>RBX1_CAEEL</name>
<sequence>MAQASDSTAMEVEEATNQTVKKRFEVKKWSAVALWAWDIQVDNCAICRNHIMDLCIECQANQAAGLKDECTVAWGNCNHAFHFHCISRWLKTRQVCPLDNREWEFQKYGH</sequence>
<comment type="function">
    <text evidence="1 5">Component of the SCF (SKP1-CUL1-F-box protein) E3 ubiquitin ligase complex, which mediates the ubiquitination and subsequent proteasomal degradation of target proteins. Through the RING-type zinc finger, seems to recruit the E2 ubiquitination enzyme to the complex and brings it into close proximity to the substrate (By similarity). Essential for meiosis, mitotic chromosomal condensation and cytokinesis. Involved in histone H3 phosphorylation.</text>
</comment>
<comment type="pathway">
    <text>Protein modification; protein ubiquitination.</text>
</comment>
<comment type="subunit">
    <text evidence="1 4">Part of SCF complexes, which consist of a SKP1 or a SKP1-related protein, a cullin protein, and a F-box protein (By similarity). Interacts with csn-1 and csn-6.</text>
</comment>
<comment type="subcellular location">
    <subcellularLocation>
        <location evidence="1">Cytoplasm</location>
    </subcellularLocation>
    <subcellularLocation>
        <location evidence="1">Nucleus</location>
    </subcellularLocation>
</comment>
<comment type="tissue specificity">
    <text evidence="5">Strongly expressed in the gonads of hermaphrodite animals.</text>
</comment>
<comment type="developmental stage">
    <text evidence="5">Expressed at high levels in eggs and adults, and at low levels in larva.</text>
</comment>
<comment type="domain">
    <text>The RING-type zinc finger domain is essential for ubiquitin ligase activity. It coordinates an additional third zinc ion.</text>
</comment>
<comment type="similarity">
    <text evidence="6">Belongs to the RING-box family.</text>
</comment>
<comment type="caution">
    <text evidence="6">It is uncertain whether Met-1 or Met-10 is the initiator.</text>
</comment>
<comment type="sequence caution" evidence="6">
    <conflict type="erroneous initiation">
        <sequence resource="EMBL-CDS" id="BAB83695"/>
    </conflict>
</comment>
<evidence type="ECO:0000250" key="1"/>
<evidence type="ECO:0000250" key="2">
    <source>
        <dbReference type="UniProtKB" id="P62878"/>
    </source>
</evidence>
<evidence type="ECO:0000255" key="3">
    <source>
        <dbReference type="PROSITE-ProRule" id="PRU00175"/>
    </source>
</evidence>
<evidence type="ECO:0000269" key="4">
    <source>
    </source>
</evidence>
<evidence type="ECO:0000269" key="5">
    <source>
    </source>
</evidence>
<evidence type="ECO:0000305" key="6"/>
<proteinExistence type="evidence at protein level"/>
<dbReference type="EMBL" id="Z70757">
    <property type="protein sequence ID" value="CAA94801.1"/>
    <property type="molecule type" value="Genomic_DNA"/>
</dbReference>
<dbReference type="EMBL" id="AB077287">
    <property type="protein sequence ID" value="BAB83695.1"/>
    <property type="status" value="ALT_INIT"/>
    <property type="molecule type" value="mRNA"/>
</dbReference>
<dbReference type="PIR" id="T27823">
    <property type="entry name" value="T27823"/>
</dbReference>
<dbReference type="RefSeq" id="NP_505496.1">
    <property type="nucleotide sequence ID" value="NM_073095.8"/>
</dbReference>
<dbReference type="SMR" id="Q23457"/>
<dbReference type="BioGRID" id="44394">
    <property type="interactions" value="18"/>
</dbReference>
<dbReference type="ComplexPortal" id="CPX-3383">
    <property type="entry name" value="CBC-fem-1 Ubiquitin Ligase complex"/>
</dbReference>
<dbReference type="FunCoup" id="Q23457">
    <property type="interactions" value="3153"/>
</dbReference>
<dbReference type="IntAct" id="Q23457">
    <property type="interactions" value="5"/>
</dbReference>
<dbReference type="MINT" id="Q23457"/>
<dbReference type="STRING" id="6239.ZK287.5.2"/>
<dbReference type="PaxDb" id="6239-ZK287.5.1"/>
<dbReference type="PeptideAtlas" id="Q23457"/>
<dbReference type="EnsemblMetazoa" id="ZK287.5.1">
    <property type="protein sequence ID" value="ZK287.5.1"/>
    <property type="gene ID" value="WBGene00004320"/>
</dbReference>
<dbReference type="GeneID" id="179358"/>
<dbReference type="KEGG" id="cel:CELE_ZK287.5"/>
<dbReference type="UCSC" id="ZK287.5.1">
    <property type="organism name" value="c. elegans"/>
</dbReference>
<dbReference type="AGR" id="WB:WBGene00004320"/>
<dbReference type="CTD" id="179358"/>
<dbReference type="WormBase" id="ZK287.5">
    <property type="protein sequence ID" value="CE06614"/>
    <property type="gene ID" value="WBGene00004320"/>
    <property type="gene designation" value="rbx-1"/>
</dbReference>
<dbReference type="eggNOG" id="KOG2930">
    <property type="taxonomic scope" value="Eukaryota"/>
</dbReference>
<dbReference type="GeneTree" id="ENSGT00940000155618"/>
<dbReference type="HOGENOM" id="CLU_115512_2_1_1"/>
<dbReference type="InParanoid" id="Q23457"/>
<dbReference type="OMA" id="NACPLDN"/>
<dbReference type="OrthoDB" id="8962942at2759"/>
<dbReference type="PhylomeDB" id="Q23457"/>
<dbReference type="Reactome" id="R-CEL-110314">
    <property type="pathway name" value="Recognition of DNA damage by PCNA-containing replication complex"/>
</dbReference>
<dbReference type="Reactome" id="R-CEL-1234176">
    <property type="pathway name" value="Oxygen-dependent proline hydroxylation of Hypoxia-inducible Factor Alpha"/>
</dbReference>
<dbReference type="Reactome" id="R-CEL-195253">
    <property type="pathway name" value="Degradation of beta-catenin by the destruction complex"/>
</dbReference>
<dbReference type="Reactome" id="R-CEL-4641258">
    <property type="pathway name" value="Degradation of DVL"/>
</dbReference>
<dbReference type="Reactome" id="R-CEL-5632684">
    <property type="pathway name" value="Hedgehog 'on' state"/>
</dbReference>
<dbReference type="Reactome" id="R-CEL-5696394">
    <property type="pathway name" value="DNA Damage Recognition in GG-NER"/>
</dbReference>
<dbReference type="Reactome" id="R-CEL-5696395">
    <property type="pathway name" value="Formation of Incision Complex in GG-NER"/>
</dbReference>
<dbReference type="Reactome" id="R-CEL-5696400">
    <property type="pathway name" value="Dual Incision in GG-NER"/>
</dbReference>
<dbReference type="Reactome" id="R-CEL-6781823">
    <property type="pathway name" value="Formation of TC-NER Pre-Incision Complex"/>
</dbReference>
<dbReference type="Reactome" id="R-CEL-6782135">
    <property type="pathway name" value="Dual incision in TC-NER"/>
</dbReference>
<dbReference type="Reactome" id="R-CEL-6782210">
    <property type="pathway name" value="Gap-filling DNA repair synthesis and ligation in TC-NER"/>
</dbReference>
<dbReference type="Reactome" id="R-CEL-68949">
    <property type="pathway name" value="Orc1 removal from chromatin"/>
</dbReference>
<dbReference type="Reactome" id="R-CEL-8854050">
    <property type="pathway name" value="FBXL7 down-regulates AURKA during mitotic entry and in early mitosis"/>
</dbReference>
<dbReference type="Reactome" id="R-CEL-8939902">
    <property type="pathway name" value="Regulation of RUNX2 expression and activity"/>
</dbReference>
<dbReference type="Reactome" id="R-CEL-8951664">
    <property type="pathway name" value="Neddylation"/>
</dbReference>
<dbReference type="Reactome" id="R-CEL-9755511">
    <property type="pathway name" value="KEAP1-NFE2L2 pathway"/>
</dbReference>
<dbReference type="Reactome" id="R-CEL-9762114">
    <property type="pathway name" value="GSK3B and BTRC:CUL1-mediated-degradation of NFE2L2"/>
</dbReference>
<dbReference type="Reactome" id="R-CEL-983168">
    <property type="pathway name" value="Antigen processing: Ubiquitination &amp; Proteasome degradation"/>
</dbReference>
<dbReference type="UniPathway" id="UPA00143"/>
<dbReference type="PRO" id="PR:Q23457"/>
<dbReference type="Proteomes" id="UP000001940">
    <property type="component" value="Chromosome V"/>
</dbReference>
<dbReference type="Bgee" id="WBGene00004320">
    <property type="expression patterns" value="Expressed in embryo and 7 other cell types or tissues"/>
</dbReference>
<dbReference type="GO" id="GO:0031462">
    <property type="term" value="C:Cul2-RING ubiquitin ligase complex"/>
    <property type="evidence" value="ECO:0000314"/>
    <property type="project" value="ComplexPortal"/>
</dbReference>
<dbReference type="GO" id="GO:0031461">
    <property type="term" value="C:cullin-RING ubiquitin ligase complex"/>
    <property type="evidence" value="ECO:0000318"/>
    <property type="project" value="GO_Central"/>
</dbReference>
<dbReference type="GO" id="GO:0005737">
    <property type="term" value="C:cytoplasm"/>
    <property type="evidence" value="ECO:0007669"/>
    <property type="project" value="UniProtKB-SubCell"/>
</dbReference>
<dbReference type="GO" id="GO:0005634">
    <property type="term" value="C:nucleus"/>
    <property type="evidence" value="ECO:0000318"/>
    <property type="project" value="GO_Central"/>
</dbReference>
<dbReference type="GO" id="GO:0097602">
    <property type="term" value="F:cullin family protein binding"/>
    <property type="evidence" value="ECO:0000318"/>
    <property type="project" value="GO_Central"/>
</dbReference>
<dbReference type="GO" id="GO:0061630">
    <property type="term" value="F:ubiquitin protein ligase activity"/>
    <property type="evidence" value="ECO:0000318"/>
    <property type="project" value="GO_Central"/>
</dbReference>
<dbReference type="GO" id="GO:0008270">
    <property type="term" value="F:zinc ion binding"/>
    <property type="evidence" value="ECO:0007669"/>
    <property type="project" value="UniProtKB-KW"/>
</dbReference>
<dbReference type="GO" id="GO:0008595">
    <property type="term" value="P:anterior/posterior axis specification, embryo"/>
    <property type="evidence" value="ECO:0000315"/>
    <property type="project" value="WormBase"/>
</dbReference>
<dbReference type="GO" id="GO:0051301">
    <property type="term" value="P:cell division"/>
    <property type="evidence" value="ECO:0007669"/>
    <property type="project" value="UniProtKB-KW"/>
</dbReference>
<dbReference type="GO" id="GO:0030238">
    <property type="term" value="P:male sex determination"/>
    <property type="evidence" value="ECO:0000315"/>
    <property type="project" value="ComplexPortal"/>
</dbReference>
<dbReference type="GO" id="GO:0043518">
    <property type="term" value="P:negative regulation of DNA damage response, signal transduction by p53 class mediator"/>
    <property type="evidence" value="ECO:0000315"/>
    <property type="project" value="UniProtKB"/>
</dbReference>
<dbReference type="GO" id="GO:1902230">
    <property type="term" value="P:negative regulation of intrinsic apoptotic signaling pathway in response to DNA damage"/>
    <property type="evidence" value="ECO:0000315"/>
    <property type="project" value="UniProtKB"/>
</dbReference>
<dbReference type="GO" id="GO:1902104">
    <property type="term" value="P:positive regulation of metaphase/anaphase transition of meiotic cell cycle"/>
    <property type="evidence" value="ECO:0000315"/>
    <property type="project" value="WormBase"/>
</dbReference>
<dbReference type="GO" id="GO:0010623">
    <property type="term" value="P:programmed cell death involved in cell development"/>
    <property type="evidence" value="ECO:0000315"/>
    <property type="project" value="UniProtKB"/>
</dbReference>
<dbReference type="GO" id="GO:0016567">
    <property type="term" value="P:protein ubiquitination"/>
    <property type="evidence" value="ECO:0000318"/>
    <property type="project" value="GO_Central"/>
</dbReference>
<dbReference type="GO" id="GO:0051759">
    <property type="term" value="P:sister chromosome movement towards spindle pole involved in meiotic sister chromatid segregation"/>
    <property type="evidence" value="ECO:0000315"/>
    <property type="project" value="WormBase"/>
</dbReference>
<dbReference type="GO" id="GO:0006511">
    <property type="term" value="P:ubiquitin-dependent protein catabolic process"/>
    <property type="evidence" value="ECO:0000318"/>
    <property type="project" value="GO_Central"/>
</dbReference>
<dbReference type="CDD" id="cd16485">
    <property type="entry name" value="mRING-H2-C3H2C2D_RBX1"/>
    <property type="match status" value="1"/>
</dbReference>
<dbReference type="FunFam" id="3.30.40.10:FF:000010">
    <property type="entry name" value="E3 ubiquitin-protein ligase RBX1"/>
    <property type="match status" value="1"/>
</dbReference>
<dbReference type="Gene3D" id="3.30.40.10">
    <property type="entry name" value="Zinc/RING finger domain, C3HC4 (zinc finger)"/>
    <property type="match status" value="1"/>
</dbReference>
<dbReference type="InterPro" id="IPR051031">
    <property type="entry name" value="RING-box_E3_Ubiquitin_Ligase"/>
</dbReference>
<dbReference type="InterPro" id="IPR001841">
    <property type="entry name" value="Znf_RING"/>
</dbReference>
<dbReference type="InterPro" id="IPR013083">
    <property type="entry name" value="Znf_RING/FYVE/PHD"/>
</dbReference>
<dbReference type="InterPro" id="IPR024766">
    <property type="entry name" value="Znf_RING_H2"/>
</dbReference>
<dbReference type="PANTHER" id="PTHR11210">
    <property type="entry name" value="RING BOX"/>
    <property type="match status" value="1"/>
</dbReference>
<dbReference type="Pfam" id="PF12678">
    <property type="entry name" value="zf-rbx1"/>
    <property type="match status" value="1"/>
</dbReference>
<dbReference type="SUPFAM" id="SSF57850">
    <property type="entry name" value="RING/U-box"/>
    <property type="match status" value="1"/>
</dbReference>
<dbReference type="PROSITE" id="PS50089">
    <property type="entry name" value="ZF_RING_2"/>
    <property type="match status" value="1"/>
</dbReference>